<keyword id="KW-0325">Glycoprotein</keyword>
<keyword id="KW-1185">Reference proteome</keyword>
<keyword id="KW-0964">Secreted</keyword>
<keyword id="KW-0732">Signal</keyword>
<accession>P61640</accession>
<gene>
    <name type="primary">SERPINA7</name>
    <name type="synonym">TBG</name>
</gene>
<comment type="function">
    <text>Major thyroid hormone transport protein in serum.</text>
</comment>
<comment type="subcellular location">
    <subcellularLocation>
        <location>Secreted</location>
    </subcellularLocation>
</comment>
<comment type="similarity">
    <text evidence="3">Belongs to the serpin family.</text>
</comment>
<feature type="signal peptide" evidence="1">
    <location>
        <begin position="1"/>
        <end position="20"/>
    </location>
</feature>
<feature type="chain" id="PRO_0000032438" description="Thyroxine-binding globulin">
    <location>
        <begin position="21"/>
        <end position="415"/>
    </location>
</feature>
<feature type="binding site" evidence="1">
    <location>
        <position position="293"/>
    </location>
    <ligand>
        <name>thyroxine</name>
        <dbReference type="ChEBI" id="CHEBI:305790"/>
    </ligand>
</feature>
<feature type="binding site" evidence="1">
    <location>
        <position position="398"/>
    </location>
    <ligand>
        <name>thyroxine</name>
        <dbReference type="ChEBI" id="CHEBI:305790"/>
    </ligand>
</feature>
<feature type="glycosylation site" description="N-linked (GlcNAc...) asparagine" evidence="2">
    <location>
        <position position="36"/>
    </location>
</feature>
<feature type="glycosylation site" description="N-linked (GlcNAc...) asparagine" evidence="2">
    <location>
        <position position="99"/>
    </location>
</feature>
<feature type="glycosylation site" description="N-linked (GlcNAc...) asparagine" evidence="2">
    <location>
        <position position="165"/>
    </location>
</feature>
<feature type="glycosylation site" description="N-linked (GlcNAc...) asparagine" evidence="2">
    <location>
        <position position="253"/>
    </location>
</feature>
<reference key="1">
    <citation type="submission" date="2004-03" db="EMBL/GenBank/DDBJ databases">
        <title>Characterization and primary structure of chimpanzee thyroxine-binding globulin.</title>
        <authorList>
            <person name="Wissmann A."/>
            <person name="Fingerhut A."/>
            <person name="Mann K."/>
            <person name="Janssen O.E."/>
        </authorList>
    </citation>
    <scope>NUCLEOTIDE SEQUENCE [GENOMIC DNA]</scope>
</reference>
<organism>
    <name type="scientific">Pan troglodytes</name>
    <name type="common">Chimpanzee</name>
    <dbReference type="NCBI Taxonomy" id="9598"/>
    <lineage>
        <taxon>Eukaryota</taxon>
        <taxon>Metazoa</taxon>
        <taxon>Chordata</taxon>
        <taxon>Craniata</taxon>
        <taxon>Vertebrata</taxon>
        <taxon>Euteleostomi</taxon>
        <taxon>Mammalia</taxon>
        <taxon>Eutheria</taxon>
        <taxon>Euarchontoglires</taxon>
        <taxon>Primates</taxon>
        <taxon>Haplorrhini</taxon>
        <taxon>Catarrhini</taxon>
        <taxon>Hominidae</taxon>
        <taxon>Pan</taxon>
    </lineage>
</organism>
<dbReference type="EMBL" id="AY571782">
    <property type="protein sequence ID" value="AAS77608.1"/>
    <property type="molecule type" value="Genomic_DNA"/>
</dbReference>
<dbReference type="RefSeq" id="NP_001009109.1">
    <property type="nucleotide sequence ID" value="NM_001009109.1"/>
</dbReference>
<dbReference type="SMR" id="P61640"/>
<dbReference type="FunCoup" id="P61640">
    <property type="interactions" value="97"/>
</dbReference>
<dbReference type="STRING" id="9598.ENSPTRP00000038088"/>
<dbReference type="MEROPS" id="I04.955"/>
<dbReference type="GlyCosmos" id="P61640">
    <property type="glycosylation" value="4 sites, No reported glycans"/>
</dbReference>
<dbReference type="PaxDb" id="9598-ENSPTRP00000038088"/>
<dbReference type="Ensembl" id="ENSPTRT00000041232.6">
    <property type="protein sequence ID" value="ENSPTRP00000038088.5"/>
    <property type="gene ID" value="ENSPTRG00000022145.6"/>
</dbReference>
<dbReference type="GeneID" id="465791"/>
<dbReference type="KEGG" id="ptr:465791"/>
<dbReference type="CTD" id="6906"/>
<dbReference type="VGNC" id="VGNC:10180">
    <property type="gene designation" value="SERPINA7"/>
</dbReference>
<dbReference type="eggNOG" id="KOG2392">
    <property type="taxonomic scope" value="Eukaryota"/>
</dbReference>
<dbReference type="GeneTree" id="ENSGT00940000161113"/>
<dbReference type="HOGENOM" id="CLU_023330_2_1_1"/>
<dbReference type="InParanoid" id="P61640"/>
<dbReference type="OMA" id="CFKAQWA"/>
<dbReference type="TreeFam" id="TF343201"/>
<dbReference type="Proteomes" id="UP000002277">
    <property type="component" value="Chromosome X"/>
</dbReference>
<dbReference type="Bgee" id="ENSPTRG00000022145">
    <property type="expression patterns" value="Expressed in liver"/>
</dbReference>
<dbReference type="GO" id="GO:0005615">
    <property type="term" value="C:extracellular space"/>
    <property type="evidence" value="ECO:0000318"/>
    <property type="project" value="GO_Central"/>
</dbReference>
<dbReference type="GO" id="GO:0004867">
    <property type="term" value="F:serine-type endopeptidase inhibitor activity"/>
    <property type="evidence" value="ECO:0000318"/>
    <property type="project" value="GO_Central"/>
</dbReference>
<dbReference type="GO" id="GO:0070327">
    <property type="term" value="P:thyroid hormone transport"/>
    <property type="evidence" value="ECO:0007669"/>
    <property type="project" value="Ensembl"/>
</dbReference>
<dbReference type="CDD" id="cd19555">
    <property type="entry name" value="serpinA7_TBG"/>
    <property type="match status" value="1"/>
</dbReference>
<dbReference type="FunFam" id="2.30.39.10:FF:000003">
    <property type="entry name" value="alpha-1-antitrypsin isoform X1"/>
    <property type="match status" value="1"/>
</dbReference>
<dbReference type="FunFam" id="3.30.497.10:FF:000001">
    <property type="entry name" value="Serine protease inhibitor"/>
    <property type="match status" value="1"/>
</dbReference>
<dbReference type="FunFam" id="2.10.310.10:FF:000001">
    <property type="entry name" value="Serpin family A member 1"/>
    <property type="match status" value="1"/>
</dbReference>
<dbReference type="Gene3D" id="2.30.39.10">
    <property type="entry name" value="Alpha-1-antitrypsin, domain 1"/>
    <property type="match status" value="1"/>
</dbReference>
<dbReference type="Gene3D" id="3.30.497.10">
    <property type="entry name" value="Antithrombin, subunit I, domain 2"/>
    <property type="match status" value="1"/>
</dbReference>
<dbReference type="Gene3D" id="2.10.310.10">
    <property type="entry name" value="Serpins superfamily"/>
    <property type="match status" value="1"/>
</dbReference>
<dbReference type="InterPro" id="IPR023795">
    <property type="entry name" value="Serpin_CS"/>
</dbReference>
<dbReference type="InterPro" id="IPR023796">
    <property type="entry name" value="Serpin_dom"/>
</dbReference>
<dbReference type="InterPro" id="IPR000215">
    <property type="entry name" value="Serpin_fam"/>
</dbReference>
<dbReference type="InterPro" id="IPR036186">
    <property type="entry name" value="Serpin_sf"/>
</dbReference>
<dbReference type="InterPro" id="IPR042178">
    <property type="entry name" value="Serpin_sf_1"/>
</dbReference>
<dbReference type="InterPro" id="IPR042185">
    <property type="entry name" value="Serpin_sf_2"/>
</dbReference>
<dbReference type="PANTHER" id="PTHR11461">
    <property type="entry name" value="SERINE PROTEASE INHIBITOR, SERPIN"/>
    <property type="match status" value="1"/>
</dbReference>
<dbReference type="PANTHER" id="PTHR11461:SF375">
    <property type="entry name" value="THYROXINE-BINDING GLOBULIN"/>
    <property type="match status" value="1"/>
</dbReference>
<dbReference type="Pfam" id="PF00079">
    <property type="entry name" value="Serpin"/>
    <property type="match status" value="1"/>
</dbReference>
<dbReference type="PRINTS" id="PR00780">
    <property type="entry name" value="LEUSERPINII"/>
</dbReference>
<dbReference type="SMART" id="SM00093">
    <property type="entry name" value="SERPIN"/>
    <property type="match status" value="1"/>
</dbReference>
<dbReference type="SUPFAM" id="SSF56574">
    <property type="entry name" value="Serpins"/>
    <property type="match status" value="1"/>
</dbReference>
<dbReference type="PROSITE" id="PS00284">
    <property type="entry name" value="SERPIN"/>
    <property type="match status" value="1"/>
</dbReference>
<name>THBG_PANTR</name>
<proteinExistence type="inferred from homology"/>
<evidence type="ECO:0000250" key="1"/>
<evidence type="ECO:0000255" key="2"/>
<evidence type="ECO:0000305" key="3"/>
<protein>
    <recommendedName>
        <fullName>Thyroxine-binding globulin</fullName>
    </recommendedName>
    <alternativeName>
        <fullName>Serpin A7</fullName>
    </alternativeName>
    <alternativeName>
        <fullName>T4-binding globulin</fullName>
    </alternativeName>
</protein>
<sequence>MSPFLYLVLLVLGLHATIHCASPEGKVTACHSSQPNATLYKMSSINADFAFNLYRRFTVETPDKNIFFSPVSISAALVMLSFGACCSTQTEIVETLGFNLTDTPMVEIQHGFQHLICSLNFPKKELELQIGNALFIGKHLKPLAKFLNDVKTLYETEVFSTDFSNISAAKQEINSHVEMQTKGKVVGLIQDLKPNTIMVLVNYIHFKAQWANPFDPSKTEDSSSFLIDKTTTVQVPMMHQMEQYYHLVDMELNCTVLQMDYSKNALALFVLPKEGQMESVEAAMSSKTLKKWNRLLQKGWVDLFVPKFSISATYDLGATLLKMGIQHAYSENADFSGLTEDNGLKLSNAAHKAVLHIGEKGTEAAAVPEVELSDQPENTFLHPIIQIDRSFMLLILERSTRSILFLGKVVDPTEA</sequence>